<comment type="function">
    <text evidence="1">Binds to the 23S rRNA.</text>
</comment>
<comment type="similarity">
    <text evidence="1">Belongs to the bacterial ribosomal protein bL9 family.</text>
</comment>
<proteinExistence type="inferred from homology"/>
<reference key="1">
    <citation type="journal article" date="2009" name="Genome Res.">
        <title>Whole genome sequence of Desulfovibrio magneticus strain RS-1 revealed common gene clusters in magnetotactic bacteria.</title>
        <authorList>
            <person name="Nakazawa H."/>
            <person name="Arakaki A."/>
            <person name="Narita-Yamada S."/>
            <person name="Yashiro I."/>
            <person name="Jinno K."/>
            <person name="Aoki N."/>
            <person name="Tsuruyama A."/>
            <person name="Okamura Y."/>
            <person name="Tanikawa S."/>
            <person name="Fujita N."/>
            <person name="Takeyama H."/>
            <person name="Matsunaga T."/>
        </authorList>
    </citation>
    <scope>NUCLEOTIDE SEQUENCE [LARGE SCALE GENOMIC DNA]</scope>
    <source>
        <strain>ATCC 700980 / DSM 13731 / RS-1</strain>
    </source>
</reference>
<organism>
    <name type="scientific">Solidesulfovibrio magneticus (strain ATCC 700980 / DSM 13731 / RS-1)</name>
    <name type="common">Desulfovibrio magneticus</name>
    <dbReference type="NCBI Taxonomy" id="573370"/>
    <lineage>
        <taxon>Bacteria</taxon>
        <taxon>Pseudomonadati</taxon>
        <taxon>Thermodesulfobacteriota</taxon>
        <taxon>Desulfovibrionia</taxon>
        <taxon>Desulfovibrionales</taxon>
        <taxon>Desulfovibrionaceae</taxon>
        <taxon>Solidesulfovibrio</taxon>
    </lineage>
</organism>
<keyword id="KW-0687">Ribonucleoprotein</keyword>
<keyword id="KW-0689">Ribosomal protein</keyword>
<keyword id="KW-0694">RNA-binding</keyword>
<keyword id="KW-0699">rRNA-binding</keyword>
<evidence type="ECO:0000255" key="1">
    <source>
        <dbReference type="HAMAP-Rule" id="MF_00503"/>
    </source>
</evidence>
<evidence type="ECO:0000256" key="2">
    <source>
        <dbReference type="SAM" id="MobiDB-lite"/>
    </source>
</evidence>
<evidence type="ECO:0000305" key="3"/>
<sequence>MELILRADVENLGRLGDKVSVKPGYGRNYLIPQGLAMLATPANLRRFENESKKLQAKRDALIADAKGLADRLAEIAIVIEVRVGEGAKLYGSVTTAIIADKLAELGFDIDRKKIVLAEPIRSLGHYDVPVKLLPELRGSVKVSVVRQGGPEDEEIAEAAPVAEAQAEADGHSTEETA</sequence>
<gene>
    <name evidence="1" type="primary">rplI</name>
    <name type="ordered locus">DMR_27020</name>
</gene>
<feature type="chain" id="PRO_1000206544" description="Large ribosomal subunit protein bL9">
    <location>
        <begin position="1"/>
        <end position="177"/>
    </location>
</feature>
<feature type="region of interest" description="Disordered" evidence="2">
    <location>
        <begin position="151"/>
        <end position="177"/>
    </location>
</feature>
<feature type="compositionally biased region" description="Low complexity" evidence="2">
    <location>
        <begin position="157"/>
        <end position="167"/>
    </location>
</feature>
<feature type="compositionally biased region" description="Basic and acidic residues" evidence="2">
    <location>
        <begin position="168"/>
        <end position="177"/>
    </location>
</feature>
<dbReference type="EMBL" id="AP010904">
    <property type="protein sequence ID" value="BAH76193.1"/>
    <property type="molecule type" value="Genomic_DNA"/>
</dbReference>
<dbReference type="RefSeq" id="WP_015861367.1">
    <property type="nucleotide sequence ID" value="NC_012796.1"/>
</dbReference>
<dbReference type="SMR" id="C4XGN5"/>
<dbReference type="STRING" id="573370.DMR_27020"/>
<dbReference type="KEGG" id="dma:DMR_27020"/>
<dbReference type="eggNOG" id="COG0359">
    <property type="taxonomic scope" value="Bacteria"/>
</dbReference>
<dbReference type="HOGENOM" id="CLU_078938_4_1_7"/>
<dbReference type="OrthoDB" id="9788336at2"/>
<dbReference type="Proteomes" id="UP000009071">
    <property type="component" value="Chromosome"/>
</dbReference>
<dbReference type="GO" id="GO:1990904">
    <property type="term" value="C:ribonucleoprotein complex"/>
    <property type="evidence" value="ECO:0007669"/>
    <property type="project" value="UniProtKB-KW"/>
</dbReference>
<dbReference type="GO" id="GO:0005840">
    <property type="term" value="C:ribosome"/>
    <property type="evidence" value="ECO:0007669"/>
    <property type="project" value="UniProtKB-KW"/>
</dbReference>
<dbReference type="GO" id="GO:0019843">
    <property type="term" value="F:rRNA binding"/>
    <property type="evidence" value="ECO:0007669"/>
    <property type="project" value="UniProtKB-UniRule"/>
</dbReference>
<dbReference type="GO" id="GO:0003735">
    <property type="term" value="F:structural constituent of ribosome"/>
    <property type="evidence" value="ECO:0007669"/>
    <property type="project" value="InterPro"/>
</dbReference>
<dbReference type="GO" id="GO:0006412">
    <property type="term" value="P:translation"/>
    <property type="evidence" value="ECO:0007669"/>
    <property type="project" value="UniProtKB-UniRule"/>
</dbReference>
<dbReference type="Gene3D" id="3.10.430.100">
    <property type="entry name" value="Ribosomal protein L9, C-terminal domain"/>
    <property type="match status" value="1"/>
</dbReference>
<dbReference type="Gene3D" id="3.40.5.10">
    <property type="entry name" value="Ribosomal protein L9, N-terminal domain"/>
    <property type="match status" value="1"/>
</dbReference>
<dbReference type="HAMAP" id="MF_00503">
    <property type="entry name" value="Ribosomal_bL9"/>
    <property type="match status" value="1"/>
</dbReference>
<dbReference type="InterPro" id="IPR000244">
    <property type="entry name" value="Ribosomal_bL9"/>
</dbReference>
<dbReference type="InterPro" id="IPR009027">
    <property type="entry name" value="Ribosomal_bL9/RNase_H1_N"/>
</dbReference>
<dbReference type="InterPro" id="IPR020594">
    <property type="entry name" value="Ribosomal_bL9_bac/chp"/>
</dbReference>
<dbReference type="InterPro" id="IPR020069">
    <property type="entry name" value="Ribosomal_bL9_C"/>
</dbReference>
<dbReference type="InterPro" id="IPR036791">
    <property type="entry name" value="Ribosomal_bL9_C_sf"/>
</dbReference>
<dbReference type="InterPro" id="IPR020070">
    <property type="entry name" value="Ribosomal_bL9_N"/>
</dbReference>
<dbReference type="InterPro" id="IPR036935">
    <property type="entry name" value="Ribosomal_bL9_N_sf"/>
</dbReference>
<dbReference type="NCBIfam" id="TIGR00158">
    <property type="entry name" value="L9"/>
    <property type="match status" value="1"/>
</dbReference>
<dbReference type="PANTHER" id="PTHR21368">
    <property type="entry name" value="50S RIBOSOMAL PROTEIN L9"/>
    <property type="match status" value="1"/>
</dbReference>
<dbReference type="Pfam" id="PF03948">
    <property type="entry name" value="Ribosomal_L9_C"/>
    <property type="match status" value="1"/>
</dbReference>
<dbReference type="Pfam" id="PF01281">
    <property type="entry name" value="Ribosomal_L9_N"/>
    <property type="match status" value="1"/>
</dbReference>
<dbReference type="SUPFAM" id="SSF55658">
    <property type="entry name" value="L9 N-domain-like"/>
    <property type="match status" value="1"/>
</dbReference>
<dbReference type="SUPFAM" id="SSF55653">
    <property type="entry name" value="Ribosomal protein L9 C-domain"/>
    <property type="match status" value="1"/>
</dbReference>
<dbReference type="PROSITE" id="PS00651">
    <property type="entry name" value="RIBOSOMAL_L9"/>
    <property type="match status" value="1"/>
</dbReference>
<name>RL9_SOLM1</name>
<accession>C4XGN5</accession>
<protein>
    <recommendedName>
        <fullName evidence="1">Large ribosomal subunit protein bL9</fullName>
    </recommendedName>
    <alternativeName>
        <fullName evidence="3">50S ribosomal protein L9</fullName>
    </alternativeName>
</protein>